<sequence>MLIDADSCPVKTEIYRVMNRYQLKTFVVANRFFPLPDEALLERVVVSDKFDSADDWIVEHVQEASIVITSDIPLAARVVRAGGVCLSPTGRTFDASSIGHVLALRNLMNDLRGQGKVISSPRPFCCKDRSAFLSALDLAVQRLKRCGY</sequence>
<accession>Q6G1Q5</accession>
<reference key="1">
    <citation type="journal article" date="2004" name="Proc. Natl. Acad. Sci. U.S.A.">
        <title>The louse-borne human pathogen Bartonella quintana is a genomic derivative of the zoonotic agent Bartonella henselae.</title>
        <authorList>
            <person name="Alsmark U.C.M."/>
            <person name="Frank A.C."/>
            <person name="Karlberg E.O."/>
            <person name="Legault B.-A."/>
            <person name="Ardell D.H."/>
            <person name="Canbaeck B."/>
            <person name="Eriksson A.-S."/>
            <person name="Naeslund A.K."/>
            <person name="Handley S.A."/>
            <person name="Huvet M."/>
            <person name="La Scola B."/>
            <person name="Holmberg M."/>
            <person name="Andersson S.G.E."/>
        </authorList>
    </citation>
    <scope>NUCLEOTIDE SEQUENCE [LARGE SCALE GENOMIC DNA]</scope>
    <source>
        <strain>ATCC 49882 / DSM 28221 / CCUG 30454 / Houston 1</strain>
    </source>
</reference>
<name>Y1619_BARHE</name>
<evidence type="ECO:0000255" key="1">
    <source>
        <dbReference type="HAMAP-Rule" id="MF_00489"/>
    </source>
</evidence>
<comment type="similarity">
    <text evidence="1">Belongs to the UPF0178 family.</text>
</comment>
<organism>
    <name type="scientific">Bartonella henselae (strain ATCC 49882 / DSM 28221 / CCUG 30454 / Houston 1)</name>
    <name type="common">Rochalimaea henselae</name>
    <dbReference type="NCBI Taxonomy" id="283166"/>
    <lineage>
        <taxon>Bacteria</taxon>
        <taxon>Pseudomonadati</taxon>
        <taxon>Pseudomonadota</taxon>
        <taxon>Alphaproteobacteria</taxon>
        <taxon>Hyphomicrobiales</taxon>
        <taxon>Bartonellaceae</taxon>
        <taxon>Bartonella</taxon>
    </lineage>
</organism>
<protein>
    <recommendedName>
        <fullName evidence="1">UPF0178 protein BH16190</fullName>
    </recommendedName>
</protein>
<dbReference type="EMBL" id="BX897699">
    <property type="protein sequence ID" value="CAF28382.1"/>
    <property type="molecule type" value="Genomic_DNA"/>
</dbReference>
<dbReference type="PaxDb" id="283166-BH16190"/>
<dbReference type="EnsemblBacteria" id="CAF28382">
    <property type="protein sequence ID" value="CAF28382"/>
    <property type="gene ID" value="BH16190"/>
</dbReference>
<dbReference type="KEGG" id="bhe:BH16190"/>
<dbReference type="eggNOG" id="COG1671">
    <property type="taxonomic scope" value="Bacteria"/>
</dbReference>
<dbReference type="Proteomes" id="UP000000421">
    <property type="component" value="Chromosome"/>
</dbReference>
<dbReference type="HAMAP" id="MF_00489">
    <property type="entry name" value="UPF0178"/>
    <property type="match status" value="1"/>
</dbReference>
<dbReference type="InterPro" id="IPR003791">
    <property type="entry name" value="UPF0178"/>
</dbReference>
<dbReference type="NCBIfam" id="NF001095">
    <property type="entry name" value="PRK00124.1"/>
    <property type="match status" value="1"/>
</dbReference>
<dbReference type="PANTHER" id="PTHR35146">
    <property type="entry name" value="UPF0178 PROTEIN YAII"/>
    <property type="match status" value="1"/>
</dbReference>
<dbReference type="PANTHER" id="PTHR35146:SF1">
    <property type="entry name" value="UPF0178 PROTEIN YAII"/>
    <property type="match status" value="1"/>
</dbReference>
<dbReference type="Pfam" id="PF02639">
    <property type="entry name" value="DUF188"/>
    <property type="match status" value="1"/>
</dbReference>
<gene>
    <name type="ordered locus">BH16190</name>
</gene>
<feature type="chain" id="PRO_0000175962" description="UPF0178 protein BH16190">
    <location>
        <begin position="1"/>
        <end position="148"/>
    </location>
</feature>
<proteinExistence type="inferred from homology"/>